<feature type="chain" id="PRO_0000371468" description="Uncharacterized protein IMPP7">
    <location>
        <begin position="1" status="less than"/>
        <end position="11" status="greater than"/>
    </location>
</feature>
<feature type="non-terminal residue" evidence="2">
    <location>
        <position position="1"/>
    </location>
</feature>
<feature type="non-terminal residue" evidence="2">
    <location>
        <position position="11"/>
    </location>
</feature>
<evidence type="ECO:0000269" key="1">
    <source>
    </source>
</evidence>
<evidence type="ECO:0000303" key="2">
    <source>
    </source>
</evidence>
<keyword id="KW-0903">Direct protein sequencing</keyword>
<protein>
    <recommendedName>
        <fullName evidence="2">Uncharacterized protein IMPP7</fullName>
    </recommendedName>
</protein>
<proteinExistence type="evidence at protein level"/>
<name>IMP07_NAUMA</name>
<organism>
    <name type="scientific">Nautilus macromphalus</name>
    <name type="common">Bellybutton nautilus</name>
    <dbReference type="NCBI Taxonomy" id="34576"/>
    <lineage>
        <taxon>Eukaryota</taxon>
        <taxon>Metazoa</taxon>
        <taxon>Spiralia</taxon>
        <taxon>Lophotrochozoa</taxon>
        <taxon>Mollusca</taxon>
        <taxon>Cephalopoda</taxon>
        <taxon>Nautiloidea</taxon>
        <taxon>Nautilida</taxon>
        <taxon>Nautilidae</taxon>
        <taxon>Nautilus</taxon>
    </lineage>
</organism>
<sequence>TFVSSQVSGPR</sequence>
<comment type="tissue specificity">
    <text evidence="1">Nacreous layer of shell.</text>
</comment>
<accession>P85394</accession>
<reference key="1">
    <citation type="journal article" date="2009" name="ChemBioChem">
        <title>Evolution of nacre: biochemistry and 'shellomics' of the shell organic matrix of the cephalopod Nautilus macromphalus.</title>
        <authorList>
            <person name="Marie B."/>
            <person name="Marin F."/>
            <person name="Marie A."/>
            <person name="Bedouet L."/>
            <person name="Dubost L."/>
            <person name="Alcaraz G."/>
            <person name="Milet C."/>
            <person name="Luquet G."/>
        </authorList>
    </citation>
    <scope>PROTEIN SEQUENCE</scope>
    <scope>TISSUE SPECIFICITY</scope>
    <source>
        <tissue>Shell</tissue>
    </source>
</reference>